<dbReference type="EMBL" id="AC007290">
    <property type="protein sequence ID" value="AAD26884.1"/>
    <property type="molecule type" value="Genomic_DNA"/>
</dbReference>
<dbReference type="EMBL" id="CP002685">
    <property type="protein sequence ID" value="AEC07952.1"/>
    <property type="molecule type" value="Genomic_DNA"/>
</dbReference>
<dbReference type="EMBL" id="BT022030">
    <property type="protein sequence ID" value="AAY25442.1"/>
    <property type="molecule type" value="mRNA"/>
</dbReference>
<dbReference type="PIR" id="A84670">
    <property type="entry name" value="A84670"/>
</dbReference>
<dbReference type="RefSeq" id="NP_180288.1">
    <property type="nucleotide sequence ID" value="NM_128278.3"/>
</dbReference>
<dbReference type="SMR" id="Q9SHS8"/>
<dbReference type="FunCoup" id="Q9SHS8">
    <property type="interactions" value="4290"/>
</dbReference>
<dbReference type="STRING" id="3702.Q9SHS8"/>
<dbReference type="GlyGen" id="Q9SHS8">
    <property type="glycosylation" value="1 site"/>
</dbReference>
<dbReference type="PaxDb" id="3702-AT2G27200.1"/>
<dbReference type="ProteomicsDB" id="238575"/>
<dbReference type="EnsemblPlants" id="AT2G27200.1">
    <property type="protein sequence ID" value="AT2G27200.1"/>
    <property type="gene ID" value="AT2G27200"/>
</dbReference>
<dbReference type="GeneID" id="817262"/>
<dbReference type="Gramene" id="AT2G27200.1">
    <property type="protein sequence ID" value="AT2G27200.1"/>
    <property type="gene ID" value="AT2G27200"/>
</dbReference>
<dbReference type="KEGG" id="ath:AT2G27200"/>
<dbReference type="Araport" id="AT2G27200"/>
<dbReference type="TAIR" id="AT2G27200">
    <property type="gene designation" value="LSG1-1"/>
</dbReference>
<dbReference type="eggNOG" id="KOG1424">
    <property type="taxonomic scope" value="Eukaryota"/>
</dbReference>
<dbReference type="HOGENOM" id="CLU_011072_10_0_1"/>
<dbReference type="InParanoid" id="Q9SHS8"/>
<dbReference type="OMA" id="VNKADMM"/>
<dbReference type="PhylomeDB" id="Q9SHS8"/>
<dbReference type="PRO" id="PR:Q9SHS8"/>
<dbReference type="Proteomes" id="UP000006548">
    <property type="component" value="Chromosome 2"/>
</dbReference>
<dbReference type="ExpressionAtlas" id="Q9SHS8">
    <property type="expression patterns" value="baseline and differential"/>
</dbReference>
<dbReference type="GO" id="GO:0005829">
    <property type="term" value="C:cytosol"/>
    <property type="evidence" value="ECO:0000314"/>
    <property type="project" value="TAIR"/>
</dbReference>
<dbReference type="GO" id="GO:0005525">
    <property type="term" value="F:GTP binding"/>
    <property type="evidence" value="ECO:0007669"/>
    <property type="project" value="UniProtKB-KW"/>
</dbReference>
<dbReference type="GO" id="GO:0003924">
    <property type="term" value="F:GTPase activity"/>
    <property type="evidence" value="ECO:0007669"/>
    <property type="project" value="InterPro"/>
</dbReference>
<dbReference type="CDD" id="cd01857">
    <property type="entry name" value="HSR1_MMR1"/>
    <property type="match status" value="1"/>
</dbReference>
<dbReference type="FunFam" id="1.10.1580.10:FF:000008">
    <property type="entry name" value="Large subunit GTPase 1"/>
    <property type="match status" value="1"/>
</dbReference>
<dbReference type="FunFam" id="3.40.50.300:FF:001151">
    <property type="entry name" value="Large subunit GTPase 1"/>
    <property type="match status" value="1"/>
</dbReference>
<dbReference type="Gene3D" id="1.10.1580.10">
    <property type="match status" value="1"/>
</dbReference>
<dbReference type="Gene3D" id="3.40.50.300">
    <property type="entry name" value="P-loop containing nucleotide triphosphate hydrolases"/>
    <property type="match status" value="1"/>
</dbReference>
<dbReference type="InterPro" id="IPR030378">
    <property type="entry name" value="G_CP_dom"/>
</dbReference>
<dbReference type="InterPro" id="IPR043358">
    <property type="entry name" value="GNL1-like"/>
</dbReference>
<dbReference type="InterPro" id="IPR006073">
    <property type="entry name" value="GTP-bd"/>
</dbReference>
<dbReference type="InterPro" id="IPR023179">
    <property type="entry name" value="GTP-bd_ortho_bundle_sf"/>
</dbReference>
<dbReference type="InterPro" id="IPR027417">
    <property type="entry name" value="P-loop_NTPase"/>
</dbReference>
<dbReference type="PANTHER" id="PTHR45709:SF4">
    <property type="entry name" value="GTPASE LSG1-1"/>
    <property type="match status" value="1"/>
</dbReference>
<dbReference type="PANTHER" id="PTHR45709">
    <property type="entry name" value="LARGE SUBUNIT GTPASE 1 HOMOLOG-RELATED"/>
    <property type="match status" value="1"/>
</dbReference>
<dbReference type="Pfam" id="PF01926">
    <property type="entry name" value="MMR_HSR1"/>
    <property type="match status" value="1"/>
</dbReference>
<dbReference type="PRINTS" id="PR00326">
    <property type="entry name" value="GTP1OBG"/>
</dbReference>
<dbReference type="SUPFAM" id="SSF52540">
    <property type="entry name" value="P-loop containing nucleoside triphosphate hydrolases"/>
    <property type="match status" value="1"/>
</dbReference>
<dbReference type="PROSITE" id="PS51721">
    <property type="entry name" value="G_CP"/>
    <property type="match status" value="1"/>
</dbReference>
<keyword id="KW-0963">Cytoplasm</keyword>
<keyword id="KW-0342">GTP-binding</keyword>
<keyword id="KW-0378">Hydrolase</keyword>
<keyword id="KW-0547">Nucleotide-binding</keyword>
<keyword id="KW-1185">Reference proteome</keyword>
<sequence>MGKNEKTSLGRALVKHHNHMIQETKEKGKSYKDQHKKVLESVTEVSDIDAIIEQAEEAERLFAIHHDSATPVPINMDTGSSSSGITAKEWKEQRMREEALHASSLQVPRRPHWTPKMNVEKLDANEKQAFLTWRRKLASLEENEKLVLTPFEKNLDIWRQLWRVLERSDLIVMVVDARDPLFYRCPDLEAYAQEIDEHKKTMLLVNKADLLPSYVREKWAEYFSRNNILFVFWSAKAATATLEGKPLKEQWRAPDTTQKTDNPAVKVYGRDDLLDRLKLEALEIVKMRKSRGVSATSTESHCEQVVVGFVGYPNVGKSSTINALVGQKRTGVTSTPGKTKHFQTLIISEDLMLCDCPGLVFPSFSSSRYEMVASGVLPIDRMTEHLEAIKVVAELVPRHAIEDVYNISLPKPKSYEPQSRPPLASELLRTYCLSRGYVASSGLPDETRAARQILKDYIEGKLPHFAMPPEITRDDENETADDTLGAETREGSQTEKKGEEAPSLGLDQVLDDLSSFDLANGLVSSKTKQHKKSHRKQ</sequence>
<feature type="chain" id="PRO_0000432559" description="GTPase LSG1-1">
    <location>
        <begin position="1"/>
        <end position="537"/>
    </location>
</feature>
<feature type="domain" description="CP-type G" evidence="2">
    <location>
        <begin position="158"/>
        <end position="362"/>
    </location>
</feature>
<feature type="region of interest" description="G4" evidence="2">
    <location>
        <begin position="206"/>
        <end position="209"/>
    </location>
</feature>
<feature type="region of interest" description="G5" evidence="2">
    <location>
        <begin position="234"/>
        <end position="236"/>
    </location>
</feature>
<feature type="region of interest" description="G1" evidence="2">
    <location>
        <begin position="311"/>
        <end position="318"/>
    </location>
</feature>
<feature type="region of interest" description="G2" evidence="2">
    <location>
        <begin position="337"/>
        <end position="341"/>
    </location>
</feature>
<feature type="region of interest" description="G3" evidence="2">
    <location>
        <begin position="355"/>
        <end position="358"/>
    </location>
</feature>
<feature type="region of interest" description="Disordered" evidence="3">
    <location>
        <begin position="484"/>
        <end position="508"/>
    </location>
</feature>
<feature type="short sequence motif" description="DARXP motif">
    <location>
        <begin position="176"/>
        <end position="180"/>
    </location>
</feature>
<feature type="compositionally biased region" description="Basic and acidic residues" evidence="3">
    <location>
        <begin position="487"/>
        <end position="500"/>
    </location>
</feature>
<feature type="binding site" evidence="1">
    <location>
        <begin position="206"/>
        <end position="209"/>
    </location>
    <ligand>
        <name>GTP</name>
        <dbReference type="ChEBI" id="CHEBI:37565"/>
    </ligand>
</feature>
<feature type="binding site" evidence="1">
    <location>
        <begin position="314"/>
        <end position="319"/>
    </location>
    <ligand>
        <name>GTP</name>
        <dbReference type="ChEBI" id="CHEBI:37565"/>
    </ligand>
</feature>
<feature type="binding site" evidence="1">
    <location>
        <position position="358"/>
    </location>
    <ligand>
        <name>GTP</name>
        <dbReference type="ChEBI" id="CHEBI:37565"/>
    </ligand>
</feature>
<comment type="function">
    <text evidence="4">GTPase that might be redundant with LSG1-2 for ribosome biogenesis (Probable). Binds to 23S rRNA (PubMed:25319368).</text>
</comment>
<comment type="biophysicochemical properties">
    <kinetics>
        <text evidence="4">kcat is 0.19 min(-1).</text>
    </kinetics>
</comment>
<comment type="subcellular location">
    <subcellularLocation>
        <location evidence="4">Cytoplasm</location>
    </subcellularLocation>
</comment>
<comment type="tissue specificity">
    <text evidence="4">Ubiquitous, with the highest expression in stem and hypsophyll on day 66.</text>
</comment>
<comment type="domain">
    <text evidence="7">In contrast to other GTP-binding proteins, this family is characterized by a circular permutation of the GTPase motifs described by a G4-G1-G3 pattern.</text>
</comment>
<comment type="domain">
    <text evidence="9">The DARXP motif is also sometime designated as G6 region.</text>
</comment>
<comment type="disruption phenotype">
    <text evidence="4">No effect on the rRNA processing (PubMed:25319368). Lsg1-1 and lsg1-2 double mutants are lethal, when homozygous (PubMed:25319368).</text>
</comment>
<comment type="miscellaneous">
    <text evidence="8">Although LSG1-1 does not show a nuclear localization, is not associated with ribosomes and the lsg1-1 mutant does not show any rRNA processing alterations, it might be redundant with LSG1-2 since it can partially complement a yeast lsg1 depletion strain, it binds to rRNA and a lsg1-1 and lsg1-2 double mutant is lethal.</text>
</comment>
<comment type="similarity">
    <text evidence="2">Belongs to the TRAFAC class YlqF/YawG GTPase family.</text>
</comment>
<name>LSG11_ARATH</name>
<protein>
    <recommendedName>
        <fullName evidence="6">GTPase LSG1-1</fullName>
        <shortName evidence="6">AtLSG1-1</shortName>
    </recommendedName>
    <alternativeName>
        <fullName evidence="5">DAR GTPase 6</fullName>
    </alternativeName>
    <alternativeName>
        <fullName evidence="6">Protein YEAST LSG1 ORTHOLOG 1</fullName>
    </alternativeName>
</protein>
<organism evidence="12">
    <name type="scientific">Arabidopsis thaliana</name>
    <name type="common">Mouse-ear cress</name>
    <dbReference type="NCBI Taxonomy" id="3702"/>
    <lineage>
        <taxon>Eukaryota</taxon>
        <taxon>Viridiplantae</taxon>
        <taxon>Streptophyta</taxon>
        <taxon>Embryophyta</taxon>
        <taxon>Tracheophyta</taxon>
        <taxon>Spermatophyta</taxon>
        <taxon>Magnoliopsida</taxon>
        <taxon>eudicotyledons</taxon>
        <taxon>Gunneridae</taxon>
        <taxon>Pentapetalae</taxon>
        <taxon>rosids</taxon>
        <taxon>malvids</taxon>
        <taxon>Brassicales</taxon>
        <taxon>Brassicaceae</taxon>
        <taxon>Camelineae</taxon>
        <taxon>Arabidopsis</taxon>
    </lineage>
</organism>
<gene>
    <name evidence="6" type="primary">LSG1-1</name>
    <name evidence="5" type="synonym">DGP6</name>
    <name evidence="10" type="ordered locus">At2g27200</name>
    <name evidence="11" type="ORF">T22O13.3</name>
</gene>
<reference key="1">
    <citation type="journal article" date="1999" name="Nature">
        <title>Sequence and analysis of chromosome 2 of the plant Arabidopsis thaliana.</title>
        <authorList>
            <person name="Lin X."/>
            <person name="Kaul S."/>
            <person name="Rounsley S.D."/>
            <person name="Shea T.P."/>
            <person name="Benito M.-I."/>
            <person name="Town C.D."/>
            <person name="Fujii C.Y."/>
            <person name="Mason T.M."/>
            <person name="Bowman C.L."/>
            <person name="Barnstead M.E."/>
            <person name="Feldblyum T.V."/>
            <person name="Buell C.R."/>
            <person name="Ketchum K.A."/>
            <person name="Lee J.J."/>
            <person name="Ronning C.M."/>
            <person name="Koo H.L."/>
            <person name="Moffat K.S."/>
            <person name="Cronin L.A."/>
            <person name="Shen M."/>
            <person name="Pai G."/>
            <person name="Van Aken S."/>
            <person name="Umayam L."/>
            <person name="Tallon L.J."/>
            <person name="Gill J.E."/>
            <person name="Adams M.D."/>
            <person name="Carrera A.J."/>
            <person name="Creasy T.H."/>
            <person name="Goodman H.M."/>
            <person name="Somerville C.R."/>
            <person name="Copenhaver G.P."/>
            <person name="Preuss D."/>
            <person name="Nierman W.C."/>
            <person name="White O."/>
            <person name="Eisen J.A."/>
            <person name="Salzberg S.L."/>
            <person name="Fraser C.M."/>
            <person name="Venter J.C."/>
        </authorList>
    </citation>
    <scope>NUCLEOTIDE SEQUENCE [LARGE SCALE GENOMIC DNA]</scope>
    <source>
        <strain>cv. Columbia</strain>
    </source>
</reference>
<reference key="2">
    <citation type="journal article" date="2017" name="Plant J.">
        <title>Araport11: a complete reannotation of the Arabidopsis thaliana reference genome.</title>
        <authorList>
            <person name="Cheng C.Y."/>
            <person name="Krishnakumar V."/>
            <person name="Chan A.P."/>
            <person name="Thibaud-Nissen F."/>
            <person name="Schobel S."/>
            <person name="Town C.D."/>
        </authorList>
    </citation>
    <scope>GENOME REANNOTATION</scope>
    <source>
        <strain>cv. Columbia</strain>
    </source>
</reference>
<reference key="3">
    <citation type="submission" date="2005-05" db="EMBL/GenBank/DDBJ databases">
        <title>Arabidopsis ORF clones.</title>
        <authorList>
            <person name="Cheuk R."/>
            <person name="Chen H."/>
            <person name="Kim C.J."/>
            <person name="Shinn P."/>
            <person name="Ecker J.R."/>
        </authorList>
    </citation>
    <scope>NUCLEOTIDE SEQUENCE [LARGE SCALE MRNA]</scope>
</reference>
<reference key="4">
    <citation type="journal article" date="1998" name="Gene">
        <title>Analysis of the genomic organisation of a small chromosome of Leishmania braziliensis M2903 reveals two genes encoding GTP-binding proteins, one of which belongs to a new G-protein family and is an antigen.</title>
        <authorList>
            <person name="Fu G."/>
            <person name="Melville S."/>
            <person name="Brewster S."/>
            <person name="Warner J."/>
            <person name="Barker D.C."/>
        </authorList>
    </citation>
    <scope>DOMAIN</scope>
    <scope>GENE FAMILY</scope>
</reference>
<reference key="5">
    <citation type="journal article" date="2006" name="Genetics">
        <title>Arabidopsis SHORT INTEGUMENTS 2 is a mitochondrial DAR GTPase.</title>
        <authorList>
            <person name="Hill T.A."/>
            <person name="Broadhvest J."/>
            <person name="Kuzoff R.K."/>
            <person name="Gasser C.S."/>
        </authorList>
    </citation>
    <scope>GENE FAMILY</scope>
    <scope>NOMENCLATURE</scope>
</reference>
<reference key="6">
    <citation type="journal article" date="2014" name="Plant J.">
        <title>The 60S associated ribosome biogenesis factor LSG1-2 is required for 40S maturation in Arabidopsis thaliana.</title>
        <authorList>
            <person name="Weis B.L."/>
            <person name="Missbach S."/>
            <person name="Marzi J."/>
            <person name="Bohnsack M.T."/>
            <person name="Schleiff E."/>
        </authorList>
    </citation>
    <scope>FUNCTION</scope>
    <scope>BIOPHYSICOCHEMICAL PROPERTIES</scope>
    <scope>SUBCELLULAR LOCATION</scope>
    <scope>TISSUE SPECIFICITY</scope>
    <scope>DISRUPTION PHENOTYPE</scope>
</reference>
<evidence type="ECO:0000250" key="1">
    <source>
        <dbReference type="UniProtKB" id="O31743"/>
    </source>
</evidence>
<evidence type="ECO:0000255" key="2">
    <source>
        <dbReference type="PROSITE-ProRule" id="PRU01058"/>
    </source>
</evidence>
<evidence type="ECO:0000256" key="3">
    <source>
        <dbReference type="SAM" id="MobiDB-lite"/>
    </source>
</evidence>
<evidence type="ECO:0000269" key="4">
    <source>
    </source>
</evidence>
<evidence type="ECO:0000303" key="5">
    <source>
    </source>
</evidence>
<evidence type="ECO:0000303" key="6">
    <source>
    </source>
</evidence>
<evidence type="ECO:0000305" key="7"/>
<evidence type="ECO:0000305" key="8">
    <source>
    </source>
</evidence>
<evidence type="ECO:0000305" key="9">
    <source>
    </source>
</evidence>
<evidence type="ECO:0000312" key="10">
    <source>
        <dbReference type="Araport" id="AT2G27200"/>
    </source>
</evidence>
<evidence type="ECO:0000312" key="11">
    <source>
        <dbReference type="EMBL" id="AAD26884.1"/>
    </source>
</evidence>
<evidence type="ECO:0000312" key="12">
    <source>
        <dbReference type="Proteomes" id="UP000006548"/>
    </source>
</evidence>
<accession>Q9SHS8</accession>
<proteinExistence type="evidence at protein level"/>